<dbReference type="EMBL" id="CP000115">
    <property type="protein sequence ID" value="ABA03706.1"/>
    <property type="molecule type" value="Genomic_DNA"/>
</dbReference>
<dbReference type="RefSeq" id="WP_011313770.1">
    <property type="nucleotide sequence ID" value="NC_007406.1"/>
</dbReference>
<dbReference type="SMR" id="Q3SVI5"/>
<dbReference type="STRING" id="323098.Nwi_0439"/>
<dbReference type="KEGG" id="nwi:Nwi_0439"/>
<dbReference type="eggNOG" id="COG0261">
    <property type="taxonomic scope" value="Bacteria"/>
</dbReference>
<dbReference type="HOGENOM" id="CLU_061463_1_2_5"/>
<dbReference type="OrthoDB" id="9813334at2"/>
<dbReference type="Proteomes" id="UP000002531">
    <property type="component" value="Chromosome"/>
</dbReference>
<dbReference type="GO" id="GO:0005737">
    <property type="term" value="C:cytoplasm"/>
    <property type="evidence" value="ECO:0007669"/>
    <property type="project" value="UniProtKB-ARBA"/>
</dbReference>
<dbReference type="GO" id="GO:1990904">
    <property type="term" value="C:ribonucleoprotein complex"/>
    <property type="evidence" value="ECO:0007669"/>
    <property type="project" value="UniProtKB-KW"/>
</dbReference>
<dbReference type="GO" id="GO:0005840">
    <property type="term" value="C:ribosome"/>
    <property type="evidence" value="ECO:0007669"/>
    <property type="project" value="UniProtKB-KW"/>
</dbReference>
<dbReference type="GO" id="GO:0019843">
    <property type="term" value="F:rRNA binding"/>
    <property type="evidence" value="ECO:0007669"/>
    <property type="project" value="UniProtKB-UniRule"/>
</dbReference>
<dbReference type="GO" id="GO:0003735">
    <property type="term" value="F:structural constituent of ribosome"/>
    <property type="evidence" value="ECO:0007669"/>
    <property type="project" value="InterPro"/>
</dbReference>
<dbReference type="GO" id="GO:0006412">
    <property type="term" value="P:translation"/>
    <property type="evidence" value="ECO:0007669"/>
    <property type="project" value="UniProtKB-UniRule"/>
</dbReference>
<dbReference type="HAMAP" id="MF_01363">
    <property type="entry name" value="Ribosomal_bL21"/>
    <property type="match status" value="1"/>
</dbReference>
<dbReference type="InterPro" id="IPR028909">
    <property type="entry name" value="bL21-like"/>
</dbReference>
<dbReference type="InterPro" id="IPR036164">
    <property type="entry name" value="bL21-like_sf"/>
</dbReference>
<dbReference type="InterPro" id="IPR001787">
    <property type="entry name" value="Ribosomal_bL21"/>
</dbReference>
<dbReference type="NCBIfam" id="TIGR00061">
    <property type="entry name" value="L21"/>
    <property type="match status" value="1"/>
</dbReference>
<dbReference type="PANTHER" id="PTHR21349">
    <property type="entry name" value="50S RIBOSOMAL PROTEIN L21"/>
    <property type="match status" value="1"/>
</dbReference>
<dbReference type="PANTHER" id="PTHR21349:SF0">
    <property type="entry name" value="LARGE RIBOSOMAL SUBUNIT PROTEIN BL21M"/>
    <property type="match status" value="1"/>
</dbReference>
<dbReference type="Pfam" id="PF00829">
    <property type="entry name" value="Ribosomal_L21p"/>
    <property type="match status" value="1"/>
</dbReference>
<dbReference type="SUPFAM" id="SSF141091">
    <property type="entry name" value="L21p-like"/>
    <property type="match status" value="1"/>
</dbReference>
<gene>
    <name evidence="1" type="primary">rplU</name>
    <name type="ordered locus">Nwi_0439</name>
</gene>
<evidence type="ECO:0000255" key="1">
    <source>
        <dbReference type="HAMAP-Rule" id="MF_01363"/>
    </source>
</evidence>
<evidence type="ECO:0000256" key="2">
    <source>
        <dbReference type="SAM" id="MobiDB-lite"/>
    </source>
</evidence>
<evidence type="ECO:0000305" key="3"/>
<feature type="chain" id="PRO_0000270699" description="Large ribosomal subunit protein bL21">
    <location>
        <begin position="1"/>
        <end position="146"/>
    </location>
</feature>
<feature type="region of interest" description="Disordered" evidence="2">
    <location>
        <begin position="103"/>
        <end position="146"/>
    </location>
</feature>
<feature type="compositionally biased region" description="Basic and acidic residues" evidence="2">
    <location>
        <begin position="116"/>
        <end position="131"/>
    </location>
</feature>
<protein>
    <recommendedName>
        <fullName evidence="1">Large ribosomal subunit protein bL21</fullName>
    </recommendedName>
    <alternativeName>
        <fullName evidence="3">50S ribosomal protein L21</fullName>
    </alternativeName>
</protein>
<comment type="function">
    <text evidence="1">This protein binds to 23S rRNA in the presence of protein L20.</text>
</comment>
<comment type="subunit">
    <text evidence="1">Part of the 50S ribosomal subunit. Contacts protein L20.</text>
</comment>
<comment type="similarity">
    <text evidence="1">Belongs to the bacterial ribosomal protein bL21 family.</text>
</comment>
<sequence>MFAVIKTGGRQYRVVPDDVLEIGKIAGEVGTIVQLGEVLVLGGDTPVLGAPTVAGASIAAEVLQHKRGPKVIAFKKRRRKHSKRKRGYRDEITVLRVTEILADGKSPTIGPRPKKEKAVEPVEGASDDKPRRAAKKTAAKTAEDAD</sequence>
<keyword id="KW-1185">Reference proteome</keyword>
<keyword id="KW-0687">Ribonucleoprotein</keyword>
<keyword id="KW-0689">Ribosomal protein</keyword>
<keyword id="KW-0694">RNA-binding</keyword>
<keyword id="KW-0699">rRNA-binding</keyword>
<accession>Q3SVI5</accession>
<proteinExistence type="inferred from homology"/>
<name>RL21_NITWN</name>
<reference key="1">
    <citation type="journal article" date="2006" name="Appl. Environ. Microbiol.">
        <title>Genome sequence of the chemolithoautotrophic nitrite-oxidizing bacterium Nitrobacter winogradskyi Nb-255.</title>
        <authorList>
            <person name="Starkenburg S.R."/>
            <person name="Chain P.S.G."/>
            <person name="Sayavedra-Soto L.A."/>
            <person name="Hauser L."/>
            <person name="Land M.L."/>
            <person name="Larimer F.W."/>
            <person name="Malfatti S.A."/>
            <person name="Klotz M.G."/>
            <person name="Bottomley P.J."/>
            <person name="Arp D.J."/>
            <person name="Hickey W.J."/>
        </authorList>
    </citation>
    <scope>NUCLEOTIDE SEQUENCE [LARGE SCALE GENOMIC DNA]</scope>
    <source>
        <strain>ATCC 25391 / DSM 10237 / CIP 104748 / NCIMB 11846 / Nb-255</strain>
    </source>
</reference>
<organism>
    <name type="scientific">Nitrobacter winogradskyi (strain ATCC 25391 / DSM 10237 / CIP 104748 / NCIMB 11846 / Nb-255)</name>
    <dbReference type="NCBI Taxonomy" id="323098"/>
    <lineage>
        <taxon>Bacteria</taxon>
        <taxon>Pseudomonadati</taxon>
        <taxon>Pseudomonadota</taxon>
        <taxon>Alphaproteobacteria</taxon>
        <taxon>Hyphomicrobiales</taxon>
        <taxon>Nitrobacteraceae</taxon>
        <taxon>Nitrobacter</taxon>
    </lineage>
</organism>